<protein>
    <recommendedName>
        <fullName evidence="1">Cytochrome b6</fullName>
    </recommendedName>
</protein>
<name>CYB6_PSINU</name>
<sequence length="215" mass="24251">MGKVYDWFEERLEIQAIADDITSKYVPPHVNIFYCLGGITLTCFLVQVATGFAMTFYYRPTVTEAFSSVQYIMTEVNFGWLVRSVHRWSASMMVLMMILHVFRVYLTGGFKNPRELTWITGVILAVLTVSFGVTGYSLPWDQIGYWAVKIVTGVPEAIPVIGSPLVELLRGSVSVGQSTLTRFYSLHTFVLPLLTAVFMLMHFLMIRKQGISGPL</sequence>
<geneLocation type="chloroplast"/>
<evidence type="ECO:0000255" key="1">
    <source>
        <dbReference type="HAMAP-Rule" id="MF_00633"/>
    </source>
</evidence>
<gene>
    <name evidence="1" type="primary">petB</name>
</gene>
<keyword id="KW-0150">Chloroplast</keyword>
<keyword id="KW-0249">Electron transport</keyword>
<keyword id="KW-0349">Heme</keyword>
<keyword id="KW-0408">Iron</keyword>
<keyword id="KW-0472">Membrane</keyword>
<keyword id="KW-0479">Metal-binding</keyword>
<keyword id="KW-0602">Photosynthesis</keyword>
<keyword id="KW-0934">Plastid</keyword>
<keyword id="KW-0793">Thylakoid</keyword>
<keyword id="KW-0812">Transmembrane</keyword>
<keyword id="KW-1133">Transmembrane helix</keyword>
<keyword id="KW-0813">Transport</keyword>
<feature type="chain" id="PRO_0000061817" description="Cytochrome b6">
    <location>
        <begin position="1"/>
        <end position="215"/>
    </location>
</feature>
<feature type="transmembrane region" description="Helical" evidence="1">
    <location>
        <begin position="32"/>
        <end position="52"/>
    </location>
</feature>
<feature type="transmembrane region" description="Helical" evidence="1">
    <location>
        <begin position="90"/>
        <end position="110"/>
    </location>
</feature>
<feature type="transmembrane region" description="Helical" evidence="1">
    <location>
        <begin position="116"/>
        <end position="136"/>
    </location>
</feature>
<feature type="transmembrane region" description="Helical" evidence="1">
    <location>
        <begin position="186"/>
        <end position="206"/>
    </location>
</feature>
<feature type="binding site" description="covalent" evidence="1">
    <location>
        <position position="35"/>
    </location>
    <ligand>
        <name>heme c</name>
        <dbReference type="ChEBI" id="CHEBI:61717"/>
    </ligand>
</feature>
<feature type="binding site" description="axial binding residue" evidence="1">
    <location>
        <position position="86"/>
    </location>
    <ligand>
        <name>heme b</name>
        <dbReference type="ChEBI" id="CHEBI:60344"/>
        <label>2</label>
    </ligand>
    <ligandPart>
        <name>Fe</name>
        <dbReference type="ChEBI" id="CHEBI:18248"/>
    </ligandPart>
</feature>
<feature type="binding site" description="axial binding residue" evidence="1">
    <location>
        <position position="100"/>
    </location>
    <ligand>
        <name>heme b</name>
        <dbReference type="ChEBI" id="CHEBI:60344"/>
        <label>1</label>
    </ligand>
    <ligandPart>
        <name>Fe</name>
        <dbReference type="ChEBI" id="CHEBI:18248"/>
    </ligandPart>
</feature>
<feature type="binding site" description="axial binding residue" evidence="1">
    <location>
        <position position="187"/>
    </location>
    <ligand>
        <name>heme b</name>
        <dbReference type="ChEBI" id="CHEBI:60344"/>
        <label>2</label>
    </ligand>
    <ligandPart>
        <name>Fe</name>
        <dbReference type="ChEBI" id="CHEBI:18248"/>
    </ligandPart>
</feature>
<feature type="binding site" description="axial binding residue" evidence="1">
    <location>
        <position position="202"/>
    </location>
    <ligand>
        <name>heme b</name>
        <dbReference type="ChEBI" id="CHEBI:60344"/>
        <label>1</label>
    </ligand>
    <ligandPart>
        <name>Fe</name>
        <dbReference type="ChEBI" id="CHEBI:18248"/>
    </ligandPart>
</feature>
<comment type="function">
    <text evidence="1">Component of the cytochrome b6-f complex, which mediates electron transfer between photosystem II (PSII) and photosystem I (PSI), cyclic electron flow around PSI, and state transitions.</text>
</comment>
<comment type="cofactor">
    <cofactor evidence="1">
        <name>heme b</name>
        <dbReference type="ChEBI" id="CHEBI:60344"/>
    </cofactor>
    <text evidence="1">Binds 2 heme b groups non-covalently with two histidine residues as axial ligands.</text>
</comment>
<comment type="cofactor">
    <cofactor evidence="1">
        <name>heme c</name>
        <dbReference type="ChEBI" id="CHEBI:61717"/>
    </cofactor>
    <text evidence="1">Binds one heme group covalently by a single cysteine link with no axial amino acid ligand. This heme was named heme ci.</text>
</comment>
<comment type="subunit">
    <text evidence="1">The 4 large subunits of the cytochrome b6-f complex are cytochrome b6, subunit IV (17 kDa polypeptide, PetD), cytochrome f and the Rieske protein, while the 4 small subunits are PetG, PetL, PetM and PetN. The complex functions as a dimer.</text>
</comment>
<comment type="subcellular location">
    <subcellularLocation>
        <location evidence="1">Plastid</location>
        <location evidence="1">Chloroplast thylakoid membrane</location>
        <topology evidence="1">Multi-pass membrane protein</topology>
    </subcellularLocation>
</comment>
<comment type="miscellaneous">
    <text evidence="1">Heme 1 (or BH or b566) is high-potential and absorbs at about 566 nm, and heme 2 (or BL or b562) is low-potential and absorbs at about 562 nm.</text>
</comment>
<comment type="similarity">
    <text evidence="1">Belongs to the cytochrome b family. PetB subfamily.</text>
</comment>
<reference key="1">
    <citation type="journal article" date="2004" name="Mol. Biol. Evol.">
        <title>Chloroplast phylogeny indicates that bryophytes are monophyletic.</title>
        <authorList>
            <person name="Nishiyama T."/>
            <person name="Wolf P.G."/>
            <person name="Kugita M."/>
            <person name="Sinclair R.B."/>
            <person name="Sugita M."/>
            <person name="Sugiura C."/>
            <person name="Wakasugi T."/>
            <person name="Yamada K."/>
            <person name="Yoshinaga K."/>
            <person name="Yamaguchi K."/>
            <person name="Ueda K."/>
            <person name="Hasebe M."/>
        </authorList>
    </citation>
    <scope>NUCLEOTIDE SEQUENCE [LARGE SCALE GENOMIC DNA]</scope>
    <source>
        <strain>Kingyoku</strain>
    </source>
</reference>
<accession>Q8WHZ3</accession>
<organism>
    <name type="scientific">Psilotum nudum</name>
    <name type="common">Whisk fern</name>
    <name type="synonym">Lycopodium nudum</name>
    <dbReference type="NCBI Taxonomy" id="3240"/>
    <lineage>
        <taxon>Eukaryota</taxon>
        <taxon>Viridiplantae</taxon>
        <taxon>Streptophyta</taxon>
        <taxon>Embryophyta</taxon>
        <taxon>Tracheophyta</taxon>
        <taxon>Polypodiopsida</taxon>
        <taxon>Ophioglossidae</taxon>
        <taxon>Psilotales</taxon>
        <taxon>Psilotaceae</taxon>
        <taxon>Psilotum</taxon>
    </lineage>
</organism>
<proteinExistence type="inferred from homology"/>
<dbReference type="EMBL" id="AP004638">
    <property type="protein sequence ID" value="BAB84246.1"/>
    <property type="molecule type" value="Genomic_DNA"/>
</dbReference>
<dbReference type="RefSeq" id="NP_569658.1">
    <property type="nucleotide sequence ID" value="NC_003386.1"/>
</dbReference>
<dbReference type="SMR" id="Q8WHZ3"/>
<dbReference type="GeneID" id="2545128"/>
<dbReference type="GO" id="GO:0009535">
    <property type="term" value="C:chloroplast thylakoid membrane"/>
    <property type="evidence" value="ECO:0007669"/>
    <property type="project" value="UniProtKB-SubCell"/>
</dbReference>
<dbReference type="GO" id="GO:0045158">
    <property type="term" value="F:electron transporter, transferring electrons within cytochrome b6/f complex of photosystem II activity"/>
    <property type="evidence" value="ECO:0007669"/>
    <property type="project" value="UniProtKB-UniRule"/>
</dbReference>
<dbReference type="GO" id="GO:0046872">
    <property type="term" value="F:metal ion binding"/>
    <property type="evidence" value="ECO:0007669"/>
    <property type="project" value="UniProtKB-KW"/>
</dbReference>
<dbReference type="GO" id="GO:0016491">
    <property type="term" value="F:oxidoreductase activity"/>
    <property type="evidence" value="ECO:0007669"/>
    <property type="project" value="InterPro"/>
</dbReference>
<dbReference type="GO" id="GO:0015979">
    <property type="term" value="P:photosynthesis"/>
    <property type="evidence" value="ECO:0007669"/>
    <property type="project" value="UniProtKB-UniRule"/>
</dbReference>
<dbReference type="GO" id="GO:0022904">
    <property type="term" value="P:respiratory electron transport chain"/>
    <property type="evidence" value="ECO:0007669"/>
    <property type="project" value="InterPro"/>
</dbReference>
<dbReference type="CDD" id="cd00284">
    <property type="entry name" value="Cytochrome_b_N"/>
    <property type="match status" value="1"/>
</dbReference>
<dbReference type="FunFam" id="1.20.810.10:FF:000001">
    <property type="entry name" value="Cytochrome b6"/>
    <property type="match status" value="1"/>
</dbReference>
<dbReference type="Gene3D" id="1.20.810.10">
    <property type="entry name" value="Cytochrome Bc1 Complex, Chain C"/>
    <property type="match status" value="1"/>
</dbReference>
<dbReference type="HAMAP" id="MF_00633">
    <property type="entry name" value="Cytb6_f_cytb6"/>
    <property type="match status" value="1"/>
</dbReference>
<dbReference type="InterPro" id="IPR005797">
    <property type="entry name" value="Cyt_b/b6_N"/>
</dbReference>
<dbReference type="InterPro" id="IPR023530">
    <property type="entry name" value="Cyt_B6_PetB"/>
</dbReference>
<dbReference type="InterPro" id="IPR027387">
    <property type="entry name" value="Cytb/b6-like_sf"/>
</dbReference>
<dbReference type="InterPro" id="IPR048259">
    <property type="entry name" value="Cytochrome_b_N_euk/bac"/>
</dbReference>
<dbReference type="InterPro" id="IPR016174">
    <property type="entry name" value="Di-haem_cyt_TM"/>
</dbReference>
<dbReference type="NCBIfam" id="NF002990">
    <property type="entry name" value="PRK03735.1"/>
    <property type="match status" value="1"/>
</dbReference>
<dbReference type="PANTHER" id="PTHR19271">
    <property type="entry name" value="CYTOCHROME B"/>
    <property type="match status" value="1"/>
</dbReference>
<dbReference type="PANTHER" id="PTHR19271:SF16">
    <property type="entry name" value="CYTOCHROME B"/>
    <property type="match status" value="1"/>
</dbReference>
<dbReference type="Pfam" id="PF00033">
    <property type="entry name" value="Cytochrome_B"/>
    <property type="match status" value="1"/>
</dbReference>
<dbReference type="PIRSF" id="PIRSF000032">
    <property type="entry name" value="Cytochrome_b6"/>
    <property type="match status" value="1"/>
</dbReference>
<dbReference type="SUPFAM" id="SSF81342">
    <property type="entry name" value="Transmembrane di-heme cytochromes"/>
    <property type="match status" value="1"/>
</dbReference>
<dbReference type="PROSITE" id="PS51002">
    <property type="entry name" value="CYTB_NTER"/>
    <property type="match status" value="1"/>
</dbReference>